<comment type="function">
    <text evidence="1">Hydrolyzes the pyrophosphate bond of UDP-2,3-diacylglucosamine to yield 2,3-diacylglucosamine 1-phosphate (lipid X) and UMP by catalyzing the attack of water at the alpha-P atom. Involved in the biosynthesis of lipid A, a phosphorylated glycolipid that anchors the lipopolysaccharide to the outer membrane of the cell.</text>
</comment>
<comment type="catalytic activity">
    <reaction evidence="1">
        <text>UDP-2-N,3-O-bis[(3R)-3-hydroxytetradecanoyl]-alpha-D-glucosamine + H2O = 2-N,3-O-bis[(3R)-3-hydroxytetradecanoyl]-alpha-D-glucosaminyl 1-phosphate + UMP + 2 H(+)</text>
        <dbReference type="Rhea" id="RHEA:25213"/>
        <dbReference type="ChEBI" id="CHEBI:15377"/>
        <dbReference type="ChEBI" id="CHEBI:15378"/>
        <dbReference type="ChEBI" id="CHEBI:57865"/>
        <dbReference type="ChEBI" id="CHEBI:57957"/>
        <dbReference type="ChEBI" id="CHEBI:78847"/>
        <dbReference type="EC" id="3.6.1.54"/>
    </reaction>
</comment>
<comment type="cofactor">
    <cofactor evidence="1">
        <name>Mn(2+)</name>
        <dbReference type="ChEBI" id="CHEBI:29035"/>
    </cofactor>
    <text evidence="1">Binds 2 Mn(2+) ions per subunit in a binuclear metal center.</text>
</comment>
<comment type="pathway">
    <text evidence="1">Glycolipid biosynthesis; lipid IV(A) biosynthesis; lipid IV(A) from (3R)-3-hydroxytetradecanoyl-[acyl-carrier-protein] and UDP-N-acetyl-alpha-D-glucosamine: step 4/6.</text>
</comment>
<comment type="subcellular location">
    <subcellularLocation>
        <location evidence="1">Cell inner membrane</location>
        <topology evidence="1">Peripheral membrane protein</topology>
        <orientation evidence="1">Cytoplasmic side</orientation>
    </subcellularLocation>
</comment>
<comment type="similarity">
    <text evidence="1">Belongs to the LpxH family.</text>
</comment>
<reference key="1">
    <citation type="journal article" date="2000" name="Nature">
        <title>Complete DNA sequence of a serogroup A strain of Neisseria meningitidis Z2491.</title>
        <authorList>
            <person name="Parkhill J."/>
            <person name="Achtman M."/>
            <person name="James K.D."/>
            <person name="Bentley S.D."/>
            <person name="Churcher C.M."/>
            <person name="Klee S.R."/>
            <person name="Morelli G."/>
            <person name="Basham D."/>
            <person name="Brown D."/>
            <person name="Chillingworth T."/>
            <person name="Davies R.M."/>
            <person name="Davis P."/>
            <person name="Devlin K."/>
            <person name="Feltwell T."/>
            <person name="Hamlin N."/>
            <person name="Holroyd S."/>
            <person name="Jagels K."/>
            <person name="Leather S."/>
            <person name="Moule S."/>
            <person name="Mungall K.L."/>
            <person name="Quail M.A."/>
            <person name="Rajandream M.A."/>
            <person name="Rutherford K.M."/>
            <person name="Simmonds M."/>
            <person name="Skelton J."/>
            <person name="Whitehead S."/>
            <person name="Spratt B.G."/>
            <person name="Barrell B.G."/>
        </authorList>
    </citation>
    <scope>NUCLEOTIDE SEQUENCE [LARGE SCALE GENOMIC DNA]</scope>
    <source>
        <strain>DSM 15465 / Z2491</strain>
    </source>
</reference>
<protein>
    <recommendedName>
        <fullName evidence="1">UDP-2,3-diacylglucosamine hydrolase</fullName>
        <ecNumber evidence="1">3.6.1.54</ecNumber>
    </recommendedName>
    <alternativeName>
        <fullName evidence="1">UDP-2,3-diacylglucosamine diphosphatase</fullName>
    </alternativeName>
</protein>
<proteinExistence type="inferred from homology"/>
<dbReference type="EC" id="3.6.1.54" evidence="1"/>
<dbReference type="EMBL" id="AL157959">
    <property type="protein sequence ID" value="CAM07977.1"/>
    <property type="molecule type" value="Genomic_DNA"/>
</dbReference>
<dbReference type="PIR" id="F81915">
    <property type="entry name" value="F81915"/>
</dbReference>
<dbReference type="RefSeq" id="WP_002246822.1">
    <property type="nucleotide sequence ID" value="NC_003116.1"/>
</dbReference>
<dbReference type="SMR" id="Q9JVS0"/>
<dbReference type="EnsemblBacteria" id="CAM07977">
    <property type="protein sequence ID" value="CAM07977"/>
    <property type="gene ID" value="NMA0723"/>
</dbReference>
<dbReference type="KEGG" id="nma:NMA0723"/>
<dbReference type="HOGENOM" id="CLU_074586_0_0_4"/>
<dbReference type="UniPathway" id="UPA00359">
    <property type="reaction ID" value="UER00480"/>
</dbReference>
<dbReference type="Proteomes" id="UP000000626">
    <property type="component" value="Chromosome"/>
</dbReference>
<dbReference type="GO" id="GO:0005737">
    <property type="term" value="C:cytoplasm"/>
    <property type="evidence" value="ECO:0007669"/>
    <property type="project" value="InterPro"/>
</dbReference>
<dbReference type="GO" id="GO:0019897">
    <property type="term" value="C:extrinsic component of plasma membrane"/>
    <property type="evidence" value="ECO:0007669"/>
    <property type="project" value="UniProtKB-UniRule"/>
</dbReference>
<dbReference type="GO" id="GO:0030145">
    <property type="term" value="F:manganese ion binding"/>
    <property type="evidence" value="ECO:0007669"/>
    <property type="project" value="UniProtKB-UniRule"/>
</dbReference>
<dbReference type="GO" id="GO:0008758">
    <property type="term" value="F:UDP-2,3-diacylglucosamine hydrolase activity"/>
    <property type="evidence" value="ECO:0007669"/>
    <property type="project" value="UniProtKB-UniRule"/>
</dbReference>
<dbReference type="GO" id="GO:0009245">
    <property type="term" value="P:lipid A biosynthetic process"/>
    <property type="evidence" value="ECO:0007669"/>
    <property type="project" value="UniProtKB-UniRule"/>
</dbReference>
<dbReference type="CDD" id="cd07398">
    <property type="entry name" value="MPP_YbbF-LpxH"/>
    <property type="match status" value="1"/>
</dbReference>
<dbReference type="Gene3D" id="3.60.21.10">
    <property type="match status" value="1"/>
</dbReference>
<dbReference type="HAMAP" id="MF_00575">
    <property type="entry name" value="LpxH"/>
    <property type="match status" value="1"/>
</dbReference>
<dbReference type="InterPro" id="IPR004843">
    <property type="entry name" value="Calcineurin-like_PHP_ApaH"/>
</dbReference>
<dbReference type="InterPro" id="IPR043461">
    <property type="entry name" value="LpxH-like"/>
</dbReference>
<dbReference type="InterPro" id="IPR029052">
    <property type="entry name" value="Metallo-depent_PP-like"/>
</dbReference>
<dbReference type="InterPro" id="IPR010138">
    <property type="entry name" value="UDP-diacylglucosamine_Hdrlase"/>
</dbReference>
<dbReference type="NCBIfam" id="TIGR01854">
    <property type="entry name" value="lipid_A_lpxH"/>
    <property type="match status" value="1"/>
</dbReference>
<dbReference type="NCBIfam" id="NF003743">
    <property type="entry name" value="PRK05340.1"/>
    <property type="match status" value="1"/>
</dbReference>
<dbReference type="PANTHER" id="PTHR34990:SF1">
    <property type="entry name" value="UDP-2,3-DIACYLGLUCOSAMINE HYDROLASE"/>
    <property type="match status" value="1"/>
</dbReference>
<dbReference type="PANTHER" id="PTHR34990">
    <property type="entry name" value="UDP-2,3-DIACYLGLUCOSAMINE HYDROLASE-RELATED"/>
    <property type="match status" value="1"/>
</dbReference>
<dbReference type="Pfam" id="PF00149">
    <property type="entry name" value="Metallophos"/>
    <property type="match status" value="1"/>
</dbReference>
<dbReference type="SUPFAM" id="SSF56300">
    <property type="entry name" value="Metallo-dependent phosphatases"/>
    <property type="match status" value="1"/>
</dbReference>
<feature type="chain" id="PRO_0000214113" description="UDP-2,3-diacylglucosamine hydrolase">
    <location>
        <begin position="1"/>
        <end position="240"/>
    </location>
</feature>
<feature type="binding site" evidence="1">
    <location>
        <position position="9"/>
    </location>
    <ligand>
        <name>Mn(2+)</name>
        <dbReference type="ChEBI" id="CHEBI:29035"/>
        <label>1</label>
    </ligand>
</feature>
<feature type="binding site" evidence="1">
    <location>
        <position position="11"/>
    </location>
    <ligand>
        <name>Mn(2+)</name>
        <dbReference type="ChEBI" id="CHEBI:29035"/>
        <label>1</label>
    </ligand>
</feature>
<feature type="binding site" evidence="1">
    <location>
        <position position="43"/>
    </location>
    <ligand>
        <name>Mn(2+)</name>
        <dbReference type="ChEBI" id="CHEBI:29035"/>
        <label>1</label>
    </ligand>
</feature>
<feature type="binding site" evidence="1">
    <location>
        <position position="43"/>
    </location>
    <ligand>
        <name>Mn(2+)</name>
        <dbReference type="ChEBI" id="CHEBI:29035"/>
        <label>2</label>
    </ligand>
</feature>
<feature type="binding site" evidence="1">
    <location>
        <begin position="81"/>
        <end position="82"/>
    </location>
    <ligand>
        <name>substrate</name>
    </ligand>
</feature>
<feature type="binding site" evidence="1">
    <location>
        <position position="81"/>
    </location>
    <ligand>
        <name>Mn(2+)</name>
        <dbReference type="ChEBI" id="CHEBI:29035"/>
        <label>2</label>
    </ligand>
</feature>
<feature type="binding site" evidence="1">
    <location>
        <position position="116"/>
    </location>
    <ligand>
        <name>Mn(2+)</name>
        <dbReference type="ChEBI" id="CHEBI:29035"/>
        <label>2</label>
    </ligand>
</feature>
<feature type="binding site" evidence="1">
    <location>
        <position position="124"/>
    </location>
    <ligand>
        <name>substrate</name>
    </ligand>
</feature>
<feature type="binding site" evidence="1">
    <location>
        <position position="162"/>
    </location>
    <ligand>
        <name>substrate</name>
    </ligand>
</feature>
<feature type="binding site" evidence="1">
    <location>
        <position position="166"/>
    </location>
    <ligand>
        <name>substrate</name>
    </ligand>
</feature>
<feature type="binding site" evidence="1">
    <location>
        <position position="169"/>
    </location>
    <ligand>
        <name>substrate</name>
    </ligand>
</feature>
<feature type="binding site" evidence="1">
    <location>
        <position position="197"/>
    </location>
    <ligand>
        <name>Mn(2+)</name>
        <dbReference type="ChEBI" id="CHEBI:29035"/>
        <label>2</label>
    </ligand>
</feature>
<feature type="binding site" evidence="1">
    <location>
        <position position="197"/>
    </location>
    <ligand>
        <name>substrate</name>
    </ligand>
</feature>
<feature type="binding site" evidence="1">
    <location>
        <position position="199"/>
    </location>
    <ligand>
        <name>Mn(2+)</name>
        <dbReference type="ChEBI" id="CHEBI:29035"/>
        <label>1</label>
    </ligand>
</feature>
<sequence>MKPAYFISDLHLSEKHPELTALLLRFLRSSAAGQARAIYILGDLFDFWVGDDEVSELNTSVAREIRKLSDKGVAVFFVRGNRDFLIGQDFCRQAGMTLLPDYSVLDLFGCKTLICHGDTLCTDDRAYQRFRKIVHRKRLQKLFLMLPLKWRTRLAAKIRRVSKMEKQVKPADIMDVNAAFTARQVRAFNAERLIHGHTHREHIHHENGFTRIVLGDWHNDYASILRVDGDGAVFVPLEKY</sequence>
<evidence type="ECO:0000255" key="1">
    <source>
        <dbReference type="HAMAP-Rule" id="MF_00575"/>
    </source>
</evidence>
<accession>Q9JVS0</accession>
<accession>A1IQE6</accession>
<gene>
    <name evidence="1" type="primary">lpxH</name>
    <name type="ordered locus">NMA0723</name>
</gene>
<organism>
    <name type="scientific">Neisseria meningitidis serogroup A / serotype 4A (strain DSM 15465 / Z2491)</name>
    <dbReference type="NCBI Taxonomy" id="122587"/>
    <lineage>
        <taxon>Bacteria</taxon>
        <taxon>Pseudomonadati</taxon>
        <taxon>Pseudomonadota</taxon>
        <taxon>Betaproteobacteria</taxon>
        <taxon>Neisseriales</taxon>
        <taxon>Neisseriaceae</taxon>
        <taxon>Neisseria</taxon>
    </lineage>
</organism>
<keyword id="KW-0997">Cell inner membrane</keyword>
<keyword id="KW-1003">Cell membrane</keyword>
<keyword id="KW-0378">Hydrolase</keyword>
<keyword id="KW-0441">Lipid A biosynthesis</keyword>
<keyword id="KW-0444">Lipid biosynthesis</keyword>
<keyword id="KW-0443">Lipid metabolism</keyword>
<keyword id="KW-0464">Manganese</keyword>
<keyword id="KW-0472">Membrane</keyword>
<keyword id="KW-0479">Metal-binding</keyword>
<name>LPXH_NEIMA</name>